<feature type="chain" id="PRO_1000135774" description="Small ribosomal subunit protein bS20">
    <location>
        <begin position="1"/>
        <end position="86"/>
    </location>
</feature>
<feature type="region of interest" description="Disordered" evidence="2">
    <location>
        <begin position="1"/>
        <end position="20"/>
    </location>
</feature>
<feature type="compositionally biased region" description="Basic residues" evidence="2">
    <location>
        <begin position="1"/>
        <end position="11"/>
    </location>
</feature>
<comment type="function">
    <text evidence="1">Binds directly to 16S ribosomal RNA.</text>
</comment>
<comment type="similarity">
    <text evidence="1">Belongs to the bacterial ribosomal protein bS20 family.</text>
</comment>
<organism>
    <name type="scientific">Bifidobacterium animalis subsp. lactis (strain AD011)</name>
    <dbReference type="NCBI Taxonomy" id="442563"/>
    <lineage>
        <taxon>Bacteria</taxon>
        <taxon>Bacillati</taxon>
        <taxon>Actinomycetota</taxon>
        <taxon>Actinomycetes</taxon>
        <taxon>Bifidobacteriales</taxon>
        <taxon>Bifidobacteriaceae</taxon>
        <taxon>Bifidobacterium</taxon>
    </lineage>
</organism>
<evidence type="ECO:0000255" key="1">
    <source>
        <dbReference type="HAMAP-Rule" id="MF_00500"/>
    </source>
</evidence>
<evidence type="ECO:0000256" key="2">
    <source>
        <dbReference type="SAM" id="MobiDB-lite"/>
    </source>
</evidence>
<evidence type="ECO:0000305" key="3"/>
<protein>
    <recommendedName>
        <fullName evidence="1">Small ribosomal subunit protein bS20</fullName>
    </recommendedName>
    <alternativeName>
        <fullName evidence="3">30S ribosomal protein S20</fullName>
    </alternativeName>
</protein>
<gene>
    <name evidence="1" type="primary">rpsT</name>
    <name type="ordered locus">BLA_1411</name>
</gene>
<dbReference type="EMBL" id="CP001213">
    <property type="protein sequence ID" value="ACL29696.1"/>
    <property type="molecule type" value="Genomic_DNA"/>
</dbReference>
<dbReference type="RefSeq" id="WP_004217863.1">
    <property type="nucleotide sequence ID" value="NC_011835.1"/>
</dbReference>
<dbReference type="SMR" id="B8DUL7"/>
<dbReference type="STRING" id="442563.BLA_1411"/>
<dbReference type="GeneID" id="29696510"/>
<dbReference type="KEGG" id="bla:BLA_1411"/>
<dbReference type="HOGENOM" id="CLU_160655_0_1_11"/>
<dbReference type="Proteomes" id="UP000002456">
    <property type="component" value="Chromosome"/>
</dbReference>
<dbReference type="GO" id="GO:0005829">
    <property type="term" value="C:cytosol"/>
    <property type="evidence" value="ECO:0007669"/>
    <property type="project" value="TreeGrafter"/>
</dbReference>
<dbReference type="GO" id="GO:0015935">
    <property type="term" value="C:small ribosomal subunit"/>
    <property type="evidence" value="ECO:0007669"/>
    <property type="project" value="TreeGrafter"/>
</dbReference>
<dbReference type="GO" id="GO:0070181">
    <property type="term" value="F:small ribosomal subunit rRNA binding"/>
    <property type="evidence" value="ECO:0007669"/>
    <property type="project" value="TreeGrafter"/>
</dbReference>
<dbReference type="GO" id="GO:0003735">
    <property type="term" value="F:structural constituent of ribosome"/>
    <property type="evidence" value="ECO:0007669"/>
    <property type="project" value="InterPro"/>
</dbReference>
<dbReference type="GO" id="GO:0006412">
    <property type="term" value="P:translation"/>
    <property type="evidence" value="ECO:0007669"/>
    <property type="project" value="UniProtKB-UniRule"/>
</dbReference>
<dbReference type="FunFam" id="1.20.58.110:FF:000001">
    <property type="entry name" value="30S ribosomal protein S20"/>
    <property type="match status" value="1"/>
</dbReference>
<dbReference type="Gene3D" id="1.20.58.110">
    <property type="entry name" value="Ribosomal protein S20"/>
    <property type="match status" value="1"/>
</dbReference>
<dbReference type="HAMAP" id="MF_00500">
    <property type="entry name" value="Ribosomal_bS20"/>
    <property type="match status" value="1"/>
</dbReference>
<dbReference type="InterPro" id="IPR002583">
    <property type="entry name" value="Ribosomal_bS20"/>
</dbReference>
<dbReference type="InterPro" id="IPR036510">
    <property type="entry name" value="Ribosomal_bS20_sf"/>
</dbReference>
<dbReference type="NCBIfam" id="TIGR00029">
    <property type="entry name" value="S20"/>
    <property type="match status" value="1"/>
</dbReference>
<dbReference type="PANTHER" id="PTHR33398">
    <property type="entry name" value="30S RIBOSOMAL PROTEIN S20"/>
    <property type="match status" value="1"/>
</dbReference>
<dbReference type="PANTHER" id="PTHR33398:SF1">
    <property type="entry name" value="SMALL RIBOSOMAL SUBUNIT PROTEIN BS20C"/>
    <property type="match status" value="1"/>
</dbReference>
<dbReference type="Pfam" id="PF01649">
    <property type="entry name" value="Ribosomal_S20p"/>
    <property type="match status" value="1"/>
</dbReference>
<dbReference type="SUPFAM" id="SSF46992">
    <property type="entry name" value="Ribosomal protein S20"/>
    <property type="match status" value="1"/>
</dbReference>
<reference key="1">
    <citation type="journal article" date="2009" name="J. Bacteriol.">
        <title>Genome sequence of the probiotic bacterium Bifidobacterium animalis subsp. lactis AD011.</title>
        <authorList>
            <person name="Kim J.F."/>
            <person name="Jeong H."/>
            <person name="Yu D.S."/>
            <person name="Choi S.-H."/>
            <person name="Hur C.-G."/>
            <person name="Park M.-S."/>
            <person name="Yoon S.H."/>
            <person name="Kim D.-W."/>
            <person name="Ji G.E."/>
            <person name="Park H.-S."/>
            <person name="Oh T.K."/>
        </authorList>
    </citation>
    <scope>NUCLEOTIDE SEQUENCE [LARGE SCALE GENOMIC DNA]</scope>
    <source>
        <strain>AD011</strain>
    </source>
</reference>
<sequence length="86" mass="9247">MANIKSQKKRVRTNEKAHQRNVAVKSALKTYIRRTREAIASGDKAAAEAAFAIAGRKLDQAAGKGVIAKNQAANRKSSLALQINAM</sequence>
<proteinExistence type="inferred from homology"/>
<name>RS20_BIFA0</name>
<keyword id="KW-1185">Reference proteome</keyword>
<keyword id="KW-0687">Ribonucleoprotein</keyword>
<keyword id="KW-0689">Ribosomal protein</keyword>
<keyword id="KW-0694">RNA-binding</keyword>
<keyword id="KW-0699">rRNA-binding</keyword>
<accession>B8DUL7</accession>